<dbReference type="EMBL" id="BC081954">
    <property type="protein sequence ID" value="AAH81954.1"/>
    <property type="molecule type" value="mRNA"/>
</dbReference>
<dbReference type="RefSeq" id="NP_001014098.1">
    <property type="nucleotide sequence ID" value="NM_001014076.1"/>
</dbReference>
<dbReference type="RefSeq" id="XP_063117959.1">
    <property type="nucleotide sequence ID" value="XM_063261889.1"/>
</dbReference>
<dbReference type="SMR" id="Q66H99"/>
<dbReference type="FunCoup" id="Q66H99">
    <property type="interactions" value="4377"/>
</dbReference>
<dbReference type="STRING" id="10116.ENSRNOP00000007169"/>
<dbReference type="PhosphoSitePlus" id="Q66H99"/>
<dbReference type="PaxDb" id="10116-ENSRNOP00000007169"/>
<dbReference type="Ensembl" id="ENSRNOT00000007169.7">
    <property type="protein sequence ID" value="ENSRNOP00000007169.5"/>
    <property type="gene ID" value="ENSRNOG00000005344.7"/>
</dbReference>
<dbReference type="GeneID" id="313981"/>
<dbReference type="KEGG" id="rno:313981"/>
<dbReference type="AGR" id="RGD:1359447"/>
<dbReference type="CTD" id="79954"/>
<dbReference type="RGD" id="1359447">
    <property type="gene designation" value="Nol10"/>
</dbReference>
<dbReference type="eggNOG" id="KOG2321">
    <property type="taxonomic scope" value="Eukaryota"/>
</dbReference>
<dbReference type="GeneTree" id="ENSGT00390000007900"/>
<dbReference type="HOGENOM" id="CLU_009923_2_0_1"/>
<dbReference type="InParanoid" id="Q66H99"/>
<dbReference type="OMA" id="GYFMDVR"/>
<dbReference type="OrthoDB" id="273340at2759"/>
<dbReference type="PhylomeDB" id="Q66H99"/>
<dbReference type="TreeFam" id="TF105808"/>
<dbReference type="PRO" id="PR:Q66H99"/>
<dbReference type="Proteomes" id="UP000002494">
    <property type="component" value="Chromosome 6"/>
</dbReference>
<dbReference type="Bgee" id="ENSRNOG00000005344">
    <property type="expression patterns" value="Expressed in ovary and 19 other cell types or tissues"/>
</dbReference>
<dbReference type="GO" id="GO:0005730">
    <property type="term" value="C:nucleolus"/>
    <property type="evidence" value="ECO:0000318"/>
    <property type="project" value="GO_Central"/>
</dbReference>
<dbReference type="GO" id="GO:0032040">
    <property type="term" value="C:small-subunit processome"/>
    <property type="evidence" value="ECO:0000318"/>
    <property type="project" value="GO_Central"/>
</dbReference>
<dbReference type="GO" id="GO:0000462">
    <property type="term" value="P:maturation of SSU-rRNA from tricistronic rRNA transcript (SSU-rRNA, 5.8S rRNA, LSU-rRNA)"/>
    <property type="evidence" value="ECO:0000318"/>
    <property type="project" value="GO_Central"/>
</dbReference>
<dbReference type="FunFam" id="2.130.10.10:FF:000601">
    <property type="entry name" value="Nucleolar protein 10"/>
    <property type="match status" value="1"/>
</dbReference>
<dbReference type="FunFam" id="2.130.10.10:FF:000980">
    <property type="entry name" value="Nucleolar protein 10"/>
    <property type="match status" value="1"/>
</dbReference>
<dbReference type="Gene3D" id="2.130.10.10">
    <property type="entry name" value="YVTN repeat-like/Quinoprotein amine dehydrogenase"/>
    <property type="match status" value="1"/>
</dbReference>
<dbReference type="InterPro" id="IPR056551">
    <property type="entry name" value="Beta-prop_NOL10_N"/>
</dbReference>
<dbReference type="InterPro" id="IPR040382">
    <property type="entry name" value="NOL10/Enp2"/>
</dbReference>
<dbReference type="InterPro" id="IPR056550">
    <property type="entry name" value="NOL10_2nd"/>
</dbReference>
<dbReference type="InterPro" id="IPR012580">
    <property type="entry name" value="NUC153"/>
</dbReference>
<dbReference type="InterPro" id="IPR015943">
    <property type="entry name" value="WD40/YVTN_repeat-like_dom_sf"/>
</dbReference>
<dbReference type="InterPro" id="IPR036322">
    <property type="entry name" value="WD40_repeat_dom_sf"/>
</dbReference>
<dbReference type="InterPro" id="IPR001680">
    <property type="entry name" value="WD40_rpt"/>
</dbReference>
<dbReference type="PANTHER" id="PTHR14927">
    <property type="entry name" value="NUCLEOLAR PROTEIN 10"/>
    <property type="match status" value="1"/>
</dbReference>
<dbReference type="PANTHER" id="PTHR14927:SF0">
    <property type="entry name" value="NUCLEOLAR PROTEIN 10"/>
    <property type="match status" value="1"/>
</dbReference>
<dbReference type="Pfam" id="PF23098">
    <property type="entry name" value="Beta-prop_NOL10_N"/>
    <property type="match status" value="1"/>
</dbReference>
<dbReference type="Pfam" id="PF23097">
    <property type="entry name" value="NOL10_2nd"/>
    <property type="match status" value="1"/>
</dbReference>
<dbReference type="Pfam" id="PF08159">
    <property type="entry name" value="NUC153"/>
    <property type="match status" value="1"/>
</dbReference>
<dbReference type="SMART" id="SM00320">
    <property type="entry name" value="WD40"/>
    <property type="match status" value="5"/>
</dbReference>
<dbReference type="SUPFAM" id="SSF50978">
    <property type="entry name" value="WD40 repeat-like"/>
    <property type="match status" value="1"/>
</dbReference>
<name>NOL10_RAT</name>
<gene>
    <name type="primary">Nol10</name>
</gene>
<comment type="subcellular location">
    <subcellularLocation>
        <location evidence="1">Nucleus</location>
        <location evidence="1">Nucleolus</location>
    </subcellularLocation>
</comment>
<comment type="similarity">
    <text evidence="5">Belongs to the WD repeat NOL10/ENP2 family.</text>
</comment>
<keyword id="KW-0007">Acetylation</keyword>
<keyword id="KW-0175">Coiled coil</keyword>
<keyword id="KW-0539">Nucleus</keyword>
<keyword id="KW-0597">Phosphoprotein</keyword>
<keyword id="KW-1185">Reference proteome</keyword>
<keyword id="KW-0677">Repeat</keyword>
<keyword id="KW-0853">WD repeat</keyword>
<reference key="1">
    <citation type="journal article" date="2004" name="Genome Res.">
        <title>The status, quality, and expansion of the NIH full-length cDNA project: the Mammalian Gene Collection (MGC).</title>
        <authorList>
            <consortium name="The MGC Project Team"/>
        </authorList>
    </citation>
    <scope>NUCLEOTIDE SEQUENCE [LARGE SCALE MRNA]</scope>
    <source>
        <tissue>Lung</tissue>
    </source>
</reference>
<sequence length="688" mass="80238">MQVSSLNEVKIYSLSCGKSLPEWLSDRKKRALQKKDVDVRRRIELIQDFEMPTVCTTIKVSKDGQYILATGTYKPRVRCYDTYQLSLKFERCLDSEVVTFEILSDDYSKIVFLHNDRYIEFHSQSGFYYKTRIPKFGRDFSYHYPSCDLYFVGASSEVYRLNLEQGRYLNPLQTDAAENNVCDINTVHGLFATGTIEGRVECWDPRVRKRVGVLDCALNSVTADSEINSLPTISALKFNGALSMAVGTSTGQVLLYDLRSDKPLLVKDHQYGLPIKSVHFQDSLDLVLSADSRIVKMWNKDSGKIFTSLEPEHDLNDVCLYPSSGMILTANESPKMGIYYIPVLGPAPRWCSFLDNLTEELEENPESTVYDDYKFVTKKDLENLGLTHLIGSPFLRAYMHGFFMDIRLYHKVKLMVNPFAYEEYRKDKIRQKIEETRAQRVQLKKLPKVNKELALKLIEEEEEKQKSTLKKKVKSLPNILTDDRFKVMFENPDFQVDEDSEEFRLLNPLVSRISEKRKKQLRLLEQQEQLKNEEEEEPEGKPSDAESSESSDDEKDWVEEVRKQRRLLQQEERVKRQEQLKEDQQTVLKPQFYEIKAGEEFRSFKESATKQKLMNKTLEDRLKLEAKHGTLSVSDTTVGSKQLTFTLKRSEQQKKQQEAEKLHRQERKKLRRSASHLRSRPRRGRPFH</sequence>
<protein>
    <recommendedName>
        <fullName>Nucleolar protein 10</fullName>
    </recommendedName>
</protein>
<organism>
    <name type="scientific">Rattus norvegicus</name>
    <name type="common">Rat</name>
    <dbReference type="NCBI Taxonomy" id="10116"/>
    <lineage>
        <taxon>Eukaryota</taxon>
        <taxon>Metazoa</taxon>
        <taxon>Chordata</taxon>
        <taxon>Craniata</taxon>
        <taxon>Vertebrata</taxon>
        <taxon>Euteleostomi</taxon>
        <taxon>Mammalia</taxon>
        <taxon>Eutheria</taxon>
        <taxon>Euarchontoglires</taxon>
        <taxon>Glires</taxon>
        <taxon>Rodentia</taxon>
        <taxon>Myomorpha</taxon>
        <taxon>Muroidea</taxon>
        <taxon>Muridae</taxon>
        <taxon>Murinae</taxon>
        <taxon>Rattus</taxon>
    </lineage>
</organism>
<accession>Q66H99</accession>
<feature type="chain" id="PRO_0000051103" description="Nucleolar protein 10">
    <location>
        <begin position="1"/>
        <end position="688"/>
    </location>
</feature>
<feature type="repeat" description="WD 1">
    <location>
        <begin position="50"/>
        <end position="90"/>
    </location>
</feature>
<feature type="repeat" description="WD 2">
    <location>
        <begin position="174"/>
        <end position="213"/>
    </location>
</feature>
<feature type="repeat" description="WD 3">
    <location>
        <begin position="228"/>
        <end position="266"/>
    </location>
</feature>
<feature type="repeat" description="WD 4">
    <location>
        <begin position="270"/>
        <end position="308"/>
    </location>
</feature>
<feature type="repeat" description="WD 5">
    <location>
        <begin position="310"/>
        <end position="349"/>
    </location>
</feature>
<feature type="region of interest" description="Disordered" evidence="4">
    <location>
        <begin position="528"/>
        <end position="561"/>
    </location>
</feature>
<feature type="region of interest" description="Disordered" evidence="4">
    <location>
        <begin position="570"/>
        <end position="589"/>
    </location>
</feature>
<feature type="region of interest" description="Disordered" evidence="4">
    <location>
        <begin position="644"/>
        <end position="688"/>
    </location>
</feature>
<feature type="coiled-coil region" evidence="3">
    <location>
        <begin position="423"/>
        <end position="476"/>
    </location>
</feature>
<feature type="coiled-coil region" evidence="3">
    <location>
        <begin position="512"/>
        <end position="589"/>
    </location>
</feature>
<feature type="coiled-coil region" evidence="3">
    <location>
        <begin position="640"/>
        <end position="673"/>
    </location>
</feature>
<feature type="compositionally biased region" description="Acidic residues" evidence="4">
    <location>
        <begin position="546"/>
        <end position="557"/>
    </location>
</feature>
<feature type="compositionally biased region" description="Basic and acidic residues" evidence="4">
    <location>
        <begin position="570"/>
        <end position="584"/>
    </location>
</feature>
<feature type="compositionally biased region" description="Basic and acidic residues" evidence="4">
    <location>
        <begin position="648"/>
        <end position="663"/>
    </location>
</feature>
<feature type="compositionally biased region" description="Basic residues" evidence="4">
    <location>
        <begin position="664"/>
        <end position="688"/>
    </location>
</feature>
<feature type="modified residue" description="N-acetylmethionine" evidence="2">
    <location>
        <position position="1"/>
    </location>
</feature>
<feature type="modified residue" description="Phosphoserine" evidence="2">
    <location>
        <position position="25"/>
    </location>
</feature>
<feature type="modified residue" description="Phosphoserine" evidence="2">
    <location>
        <position position="475"/>
    </location>
</feature>
<feature type="modified residue" description="Phosphothreonine" evidence="2">
    <location>
        <position position="481"/>
    </location>
</feature>
<feature type="modified residue" description="Phosphoserine" evidence="2">
    <location>
        <position position="514"/>
    </location>
</feature>
<evidence type="ECO:0000250" key="1"/>
<evidence type="ECO:0000250" key="2">
    <source>
        <dbReference type="UniProtKB" id="Q9BSC4"/>
    </source>
</evidence>
<evidence type="ECO:0000255" key="3"/>
<evidence type="ECO:0000256" key="4">
    <source>
        <dbReference type="SAM" id="MobiDB-lite"/>
    </source>
</evidence>
<evidence type="ECO:0000305" key="5"/>
<proteinExistence type="evidence at transcript level"/>